<sequence>MVQLYNLHPFGSQQVVPCKLEPDRFCGGGRDALFVAAGCKVEAFAVAGQELCQPRCAFSTLGRVLRLAYSEAGDYLVAIEEKNKATFLRAYVNWRNKRTENSRVCIRMIGHNVEGPFSKAFRDQMYIIEMPLSEAPLCISCCPVKGDLLVGCTNKLVLFSLKYQIINEEFSLLDFERSLIIHIDNITPVEVSFCVGYVAVMSDLEVLIVKLESGPKNGERVHHHPHKTNNRIRRTEEGISNEISQLESDDFVICQKPLELLGEKSEQSGLSVTLESTGLADEKRKYSHFQHLLYRRFAPDISSYVLSDDIKLHSLQLLPIYQTGSLTSDGKNLSQEKELLSLFCFFSLPHVGYLYMVVKSVELMSVYQYPEKSQQAVLTPQFLHVITSNNLQCFTVRCSAAAAREEDPYMDTTLKACPPVSMDVCALRIQLFIGLKAICHFKNHIILLTKAEPEAIPERRQSPKRLLSRKDTSVKIKIPPVAEAGWNLYIVNTISPVQLYKEMVDYSNTYKTVKTQSCIHLLSEAHLLVRAALMDASQLEPGEKAELLEAFKESCGHLGDCYSRLDSQHSHLTLPYYKMSGLSMAEVLARTDWTVEDGLQKYERGLIFYINHSLYENLDEELNEELAAKVVQMFYVAEPKQVPHILCSPSMKNINPLTAMSYLRKLDTSGFSSILVTLTKAAVALKMGDLDMHRNEMKSHSEMKLVCGFILEPRLLIQQRKGQIVPTELALHLKETQPGLLVASVLGLQKNNKIGIEEADSFFKVLCAKDEDTIPQLLVDFWEAQLVACLPDVVLQELFFKLTSQYIWRLSKRQPPDTTPLRTSEDLINACSHYGLIYPWVHVVISSDSLADKNYTEDLSKLQSLICGPSFDIASIIPFLEPLSEDTIAGLSVHVLCRTRLKEYEQCIDILLERCPEAVIPYANHELKEENRTLWWKKLLPELCQRIKCGGEKYQLYLSSLKETLSIVAVELELKDFMNVLPEDGTATFFLPYLLYCSRKKPLT</sequence>
<name>HPS3_HUMAN</name>
<protein>
    <recommendedName>
        <fullName evidence="9">BLOC-2 complex member HPS3</fullName>
    </recommendedName>
    <alternativeName>
        <fullName>Hermansky-Pudlak syndrome 3 protein</fullName>
    </alternativeName>
</protein>
<proteinExistence type="evidence at protein level"/>
<feature type="chain" id="PRO_0000084050" description="BLOC-2 complex member HPS3">
    <location>
        <begin position="1"/>
        <end position="1004"/>
    </location>
</feature>
<feature type="short sequence motif" description="Clathrin-binding" evidence="2">
    <location>
        <begin position="172"/>
        <end position="176"/>
    </location>
</feature>
<feature type="splice variant" id="VSP_003878" description="In isoform 2." evidence="8">
    <original>SLICGPSFDIASIIPFLEPLSEDTIAG</original>
    <variation>LPLFRSWSHFQKTLLPASVSMFCVVHA</variation>
    <location>
        <begin position="864"/>
        <end position="890"/>
    </location>
</feature>
<feature type="splice variant" id="VSP_003879" description="In isoform 2." evidence="8">
    <location>
        <begin position="891"/>
        <end position="1004"/>
    </location>
</feature>
<feature type="sequence variant" id="VAR_038379" description="In dbSNP:rs34388030.">
    <original>E</original>
    <variation>K</variation>
    <location>
        <position position="275"/>
    </location>
</feature>
<feature type="sequence variant" id="VAR_035928" description="In a colorectal cancer sample; somatic mutation; dbSNP:rs747708121." evidence="6">
    <original>R</original>
    <variation>Q</variation>
    <location>
        <position position="397"/>
    </location>
</feature>
<feature type="sequence variant" id="VAR_013251" description="In HPS3; mild; dbSNP:rs121908316." evidence="4">
    <original>R</original>
    <variation>W</variation>
    <location>
        <position position="397"/>
    </location>
</feature>
<feature type="sequence conflict" description="In Ref. 4; AAH22062." evidence="9" ref="4">
    <original>VK</original>
    <variation>AR</variation>
    <location>
        <begin position="144"/>
        <end position="145"/>
    </location>
</feature>
<feature type="sequence conflict" description="In Ref. 2; BAB71221." evidence="9" ref="2">
    <original>G</original>
    <variation>E</variation>
    <location>
        <position position="556"/>
    </location>
</feature>
<feature type="sequence conflict" description="In Ref. 4; AAH22062." evidence="9" ref="4">
    <original>S</original>
    <variation>T</variation>
    <location>
        <position position="563"/>
    </location>
</feature>
<dbReference type="EMBL" id="AF375663">
    <property type="protein sequence ID" value="AAK84131.1"/>
    <property type="molecule type" value="Genomic_DNA"/>
</dbReference>
<dbReference type="EMBL" id="AY033141">
    <property type="protein sequence ID" value="AAK53457.1"/>
    <property type="molecule type" value="mRNA"/>
</dbReference>
<dbReference type="EMBL" id="AK026357">
    <property type="protein sequence ID" value="BAB15459.1"/>
    <property type="molecule type" value="mRNA"/>
</dbReference>
<dbReference type="EMBL" id="AK056575">
    <property type="protein sequence ID" value="BAB71221.1"/>
    <property type="status" value="ALT_INIT"/>
    <property type="molecule type" value="mRNA"/>
</dbReference>
<dbReference type="EMBL" id="AK291631">
    <property type="protein sequence ID" value="BAF84320.1"/>
    <property type="molecule type" value="mRNA"/>
</dbReference>
<dbReference type="EMBL" id="CH471052">
    <property type="protein sequence ID" value="EAW78886.1"/>
    <property type="molecule type" value="Genomic_DNA"/>
</dbReference>
<dbReference type="EMBL" id="BC016901">
    <property type="protein sequence ID" value="AAH16901.1"/>
    <property type="status" value="ALT_INIT"/>
    <property type="molecule type" value="mRNA"/>
</dbReference>
<dbReference type="EMBL" id="BC022062">
    <property type="protein sequence ID" value="AAH22062.2"/>
    <property type="status" value="ALT_INIT"/>
    <property type="molecule type" value="mRNA"/>
</dbReference>
<dbReference type="EMBL" id="BC040359">
    <property type="protein sequence ID" value="AAH40359.1"/>
    <property type="molecule type" value="mRNA"/>
</dbReference>
<dbReference type="CCDS" id="CCDS3140.1">
    <molecule id="Q969F9-1"/>
</dbReference>
<dbReference type="RefSeq" id="NP_001295187.1">
    <property type="nucleotide sequence ID" value="NM_001308258.1"/>
</dbReference>
<dbReference type="RefSeq" id="NP_115759.2">
    <molecule id="Q969F9-1"/>
    <property type="nucleotide sequence ID" value="NM_032383.4"/>
</dbReference>
<dbReference type="BioGRID" id="124064">
    <property type="interactions" value="76"/>
</dbReference>
<dbReference type="ComplexPortal" id="CPX-5044">
    <property type="entry name" value="BLOC-2 complex"/>
</dbReference>
<dbReference type="CORUM" id="Q969F9"/>
<dbReference type="FunCoup" id="Q969F9">
    <property type="interactions" value="935"/>
</dbReference>
<dbReference type="IntAct" id="Q969F9">
    <property type="interactions" value="36"/>
</dbReference>
<dbReference type="MINT" id="Q969F9"/>
<dbReference type="STRING" id="9606.ENSP00000296051"/>
<dbReference type="iPTMnet" id="Q969F9"/>
<dbReference type="PhosphoSitePlus" id="Q969F9"/>
<dbReference type="BioMuta" id="HPS3"/>
<dbReference type="DMDM" id="20532121"/>
<dbReference type="jPOST" id="Q969F9"/>
<dbReference type="MassIVE" id="Q969F9"/>
<dbReference type="PaxDb" id="9606-ENSP00000296051"/>
<dbReference type="PeptideAtlas" id="Q969F9"/>
<dbReference type="ProteomicsDB" id="75751">
    <molecule id="Q969F9-1"/>
</dbReference>
<dbReference type="ProteomicsDB" id="75752">
    <molecule id="Q969F9-2"/>
</dbReference>
<dbReference type="Pumba" id="Q969F9"/>
<dbReference type="Antibodypedia" id="33559">
    <property type="antibodies" value="166 antibodies from 29 providers"/>
</dbReference>
<dbReference type="DNASU" id="84343"/>
<dbReference type="Ensembl" id="ENST00000296051.7">
    <molecule id="Q969F9-1"/>
    <property type="protein sequence ID" value="ENSP00000296051.2"/>
    <property type="gene ID" value="ENSG00000163755.9"/>
</dbReference>
<dbReference type="GeneID" id="84343"/>
<dbReference type="KEGG" id="hsa:84343"/>
<dbReference type="MANE-Select" id="ENST00000296051.7">
    <property type="protein sequence ID" value="ENSP00000296051.2"/>
    <property type="RefSeq nucleotide sequence ID" value="NM_032383.5"/>
    <property type="RefSeq protein sequence ID" value="NP_115759.2"/>
</dbReference>
<dbReference type="UCSC" id="uc003ewu.2">
    <molecule id="Q969F9-1"/>
    <property type="organism name" value="human"/>
</dbReference>
<dbReference type="AGR" id="HGNC:15597"/>
<dbReference type="CTD" id="84343"/>
<dbReference type="DisGeNET" id="84343"/>
<dbReference type="GeneCards" id="HPS3"/>
<dbReference type="GeneReviews" id="HPS3"/>
<dbReference type="HGNC" id="HGNC:15597">
    <property type="gene designation" value="HPS3"/>
</dbReference>
<dbReference type="HPA" id="ENSG00000163755">
    <property type="expression patterns" value="Low tissue specificity"/>
</dbReference>
<dbReference type="MalaCards" id="HPS3"/>
<dbReference type="MIM" id="606118">
    <property type="type" value="gene"/>
</dbReference>
<dbReference type="MIM" id="614072">
    <property type="type" value="phenotype"/>
</dbReference>
<dbReference type="neXtProt" id="NX_Q969F9"/>
<dbReference type="OpenTargets" id="ENSG00000163755"/>
<dbReference type="Orphanet" id="231512">
    <property type="disease" value="Hermansky-Pudlak syndrome due to BLOC-2 deficiency"/>
</dbReference>
<dbReference type="PharmGKB" id="PA29433"/>
<dbReference type="VEuPathDB" id="HostDB:ENSG00000163755"/>
<dbReference type="eggNOG" id="ENOG502QRQB">
    <property type="taxonomic scope" value="Eukaryota"/>
</dbReference>
<dbReference type="GeneTree" id="ENSGT00390000015458"/>
<dbReference type="InParanoid" id="Q969F9"/>
<dbReference type="OMA" id="CIPYYKM"/>
<dbReference type="OrthoDB" id="10255480at2759"/>
<dbReference type="PAN-GO" id="Q969F9">
    <property type="GO annotations" value="3 GO annotations based on evolutionary models"/>
</dbReference>
<dbReference type="PhylomeDB" id="Q969F9"/>
<dbReference type="TreeFam" id="TF324432"/>
<dbReference type="PathwayCommons" id="Q969F9"/>
<dbReference type="SignaLink" id="Q969F9"/>
<dbReference type="SIGNOR" id="Q969F9"/>
<dbReference type="BioGRID-ORCS" id="84343">
    <property type="hits" value="10 hits in 1153 CRISPR screens"/>
</dbReference>
<dbReference type="ChiTaRS" id="HPS3">
    <property type="organism name" value="human"/>
</dbReference>
<dbReference type="GeneWiki" id="HPS3"/>
<dbReference type="GenomeRNAi" id="84343"/>
<dbReference type="Pharos" id="Q969F9">
    <property type="development level" value="Tbio"/>
</dbReference>
<dbReference type="PRO" id="PR:Q969F9"/>
<dbReference type="Proteomes" id="UP000005640">
    <property type="component" value="Chromosome 3"/>
</dbReference>
<dbReference type="RNAct" id="Q969F9">
    <property type="molecule type" value="protein"/>
</dbReference>
<dbReference type="Bgee" id="ENSG00000163755">
    <property type="expression patterns" value="Expressed in ileal mucosa and 175 other cell types or tissues"/>
</dbReference>
<dbReference type="ExpressionAtlas" id="Q969F9">
    <property type="expression patterns" value="baseline and differential"/>
</dbReference>
<dbReference type="GO" id="GO:0031084">
    <property type="term" value="C:BLOC-2 complex"/>
    <property type="evidence" value="ECO:0000353"/>
    <property type="project" value="FlyBase"/>
</dbReference>
<dbReference type="GO" id="GO:0005737">
    <property type="term" value="C:cytoplasm"/>
    <property type="evidence" value="ECO:0000318"/>
    <property type="project" value="GO_Central"/>
</dbReference>
<dbReference type="GO" id="GO:0005829">
    <property type="term" value="C:cytosol"/>
    <property type="evidence" value="ECO:0007669"/>
    <property type="project" value="UniProtKB-SubCell"/>
</dbReference>
<dbReference type="GO" id="GO:0005769">
    <property type="term" value="C:early endosome"/>
    <property type="evidence" value="ECO:0000303"/>
    <property type="project" value="ComplexPortal"/>
</dbReference>
<dbReference type="GO" id="GO:0046907">
    <property type="term" value="P:intracellular transport"/>
    <property type="evidence" value="ECO:0000303"/>
    <property type="project" value="ComplexPortal"/>
</dbReference>
<dbReference type="GO" id="GO:1903232">
    <property type="term" value="P:melanosome assembly"/>
    <property type="evidence" value="ECO:0000303"/>
    <property type="project" value="ComplexPortal"/>
</dbReference>
<dbReference type="GO" id="GO:0043473">
    <property type="term" value="P:pigmentation"/>
    <property type="evidence" value="ECO:0000318"/>
    <property type="project" value="GO_Central"/>
</dbReference>
<dbReference type="GO" id="GO:0060155">
    <property type="term" value="P:platelet dense granule organization"/>
    <property type="evidence" value="ECO:0000303"/>
    <property type="project" value="ComplexPortal"/>
</dbReference>
<dbReference type="InterPro" id="IPR017216">
    <property type="entry name" value="HPS3"/>
</dbReference>
<dbReference type="InterPro" id="IPR029438">
    <property type="entry name" value="HPS3_C"/>
</dbReference>
<dbReference type="InterPro" id="IPR029437">
    <property type="entry name" value="HPS3_N"/>
</dbReference>
<dbReference type="PANTHER" id="PTHR28633:SF1">
    <property type="entry name" value="BLOC-2 COMPLEX MEMBER HPS3"/>
    <property type="match status" value="1"/>
</dbReference>
<dbReference type="PANTHER" id="PTHR28633">
    <property type="entry name" value="HERMANSKY-PUDLAK SYNDROME 3 PROTEIN"/>
    <property type="match status" value="1"/>
</dbReference>
<dbReference type="Pfam" id="PF14763">
    <property type="entry name" value="HPS3_C"/>
    <property type="match status" value="1"/>
</dbReference>
<dbReference type="Pfam" id="PF14761">
    <property type="entry name" value="HPS3_N"/>
    <property type="match status" value="1"/>
</dbReference>
<dbReference type="PIRSF" id="PIRSF037473">
    <property type="entry name" value="BLOC-2_complex_Hps3"/>
    <property type="match status" value="1"/>
</dbReference>
<reference key="1">
    <citation type="journal article" date="2001" name="Nat. Genet.">
        <title>Mutation of a new gene causes a unique form of Hermansky-Pudlak syndrome in a genetic isolate of central Puerto Rico.</title>
        <authorList>
            <person name="Anikster Y."/>
            <person name="Huizing M."/>
            <person name="White J.G."/>
            <person name="Shevchenko Y.O."/>
            <person name="Fitzpatrick D.L."/>
            <person name="Touchman J.W."/>
            <person name="Comptom J.G."/>
            <person name="Bale S.J."/>
            <person name="Swank R.T."/>
            <person name="Gahl W.A."/>
            <person name="Toro J.R."/>
        </authorList>
    </citation>
    <scope>NUCLEOTIDE SEQUENCE [GENOMIC DNA / MRNA] (ISOFORM 1)</scope>
    <scope>INVOLVEMENT IN HPS3</scope>
</reference>
<reference key="2">
    <citation type="journal article" date="2004" name="Nat. Genet.">
        <title>Complete sequencing and characterization of 21,243 full-length human cDNAs.</title>
        <authorList>
            <person name="Ota T."/>
            <person name="Suzuki Y."/>
            <person name="Nishikawa T."/>
            <person name="Otsuki T."/>
            <person name="Sugiyama T."/>
            <person name="Irie R."/>
            <person name="Wakamatsu A."/>
            <person name="Hayashi K."/>
            <person name="Sato H."/>
            <person name="Nagai K."/>
            <person name="Kimura K."/>
            <person name="Makita H."/>
            <person name="Sekine M."/>
            <person name="Obayashi M."/>
            <person name="Nishi T."/>
            <person name="Shibahara T."/>
            <person name="Tanaka T."/>
            <person name="Ishii S."/>
            <person name="Yamamoto J."/>
            <person name="Saito K."/>
            <person name="Kawai Y."/>
            <person name="Isono Y."/>
            <person name="Nakamura Y."/>
            <person name="Nagahari K."/>
            <person name="Murakami K."/>
            <person name="Yasuda T."/>
            <person name="Iwayanagi T."/>
            <person name="Wagatsuma M."/>
            <person name="Shiratori A."/>
            <person name="Sudo H."/>
            <person name="Hosoiri T."/>
            <person name="Kaku Y."/>
            <person name="Kodaira H."/>
            <person name="Kondo H."/>
            <person name="Sugawara M."/>
            <person name="Takahashi M."/>
            <person name="Kanda K."/>
            <person name="Yokoi T."/>
            <person name="Furuya T."/>
            <person name="Kikkawa E."/>
            <person name="Omura Y."/>
            <person name="Abe K."/>
            <person name="Kamihara K."/>
            <person name="Katsuta N."/>
            <person name="Sato K."/>
            <person name="Tanikawa M."/>
            <person name="Yamazaki M."/>
            <person name="Ninomiya K."/>
            <person name="Ishibashi T."/>
            <person name="Yamashita H."/>
            <person name="Murakawa K."/>
            <person name="Fujimori K."/>
            <person name="Tanai H."/>
            <person name="Kimata M."/>
            <person name="Watanabe M."/>
            <person name="Hiraoka S."/>
            <person name="Chiba Y."/>
            <person name="Ishida S."/>
            <person name="Ono Y."/>
            <person name="Takiguchi S."/>
            <person name="Watanabe S."/>
            <person name="Yosida M."/>
            <person name="Hotuta T."/>
            <person name="Kusano J."/>
            <person name="Kanehori K."/>
            <person name="Takahashi-Fujii A."/>
            <person name="Hara H."/>
            <person name="Tanase T.-O."/>
            <person name="Nomura Y."/>
            <person name="Togiya S."/>
            <person name="Komai F."/>
            <person name="Hara R."/>
            <person name="Takeuchi K."/>
            <person name="Arita M."/>
            <person name="Imose N."/>
            <person name="Musashino K."/>
            <person name="Yuuki H."/>
            <person name="Oshima A."/>
            <person name="Sasaki N."/>
            <person name="Aotsuka S."/>
            <person name="Yoshikawa Y."/>
            <person name="Matsunawa H."/>
            <person name="Ichihara T."/>
            <person name="Shiohata N."/>
            <person name="Sano S."/>
            <person name="Moriya S."/>
            <person name="Momiyama H."/>
            <person name="Satoh N."/>
            <person name="Takami S."/>
            <person name="Terashima Y."/>
            <person name="Suzuki O."/>
            <person name="Nakagawa S."/>
            <person name="Senoh A."/>
            <person name="Mizoguchi H."/>
            <person name="Goto Y."/>
            <person name="Shimizu F."/>
            <person name="Wakebe H."/>
            <person name="Hishigaki H."/>
            <person name="Watanabe T."/>
            <person name="Sugiyama A."/>
            <person name="Takemoto M."/>
            <person name="Kawakami B."/>
            <person name="Yamazaki M."/>
            <person name="Watanabe K."/>
            <person name="Kumagai A."/>
            <person name="Itakura S."/>
            <person name="Fukuzumi Y."/>
            <person name="Fujimori Y."/>
            <person name="Komiyama M."/>
            <person name="Tashiro H."/>
            <person name="Tanigami A."/>
            <person name="Fujiwara T."/>
            <person name="Ono T."/>
            <person name="Yamada K."/>
            <person name="Fujii Y."/>
            <person name="Ozaki K."/>
            <person name="Hirao M."/>
            <person name="Ohmori Y."/>
            <person name="Kawabata A."/>
            <person name="Hikiji T."/>
            <person name="Kobatake N."/>
            <person name="Inagaki H."/>
            <person name="Ikema Y."/>
            <person name="Okamoto S."/>
            <person name="Okitani R."/>
            <person name="Kawakami T."/>
            <person name="Noguchi S."/>
            <person name="Itoh T."/>
            <person name="Shigeta K."/>
            <person name="Senba T."/>
            <person name="Matsumura K."/>
            <person name="Nakajima Y."/>
            <person name="Mizuno T."/>
            <person name="Morinaga M."/>
            <person name="Sasaki M."/>
            <person name="Togashi T."/>
            <person name="Oyama M."/>
            <person name="Hata H."/>
            <person name="Watanabe M."/>
            <person name="Komatsu T."/>
            <person name="Mizushima-Sugano J."/>
            <person name="Satoh T."/>
            <person name="Shirai Y."/>
            <person name="Takahashi Y."/>
            <person name="Nakagawa K."/>
            <person name="Okumura K."/>
            <person name="Nagase T."/>
            <person name="Nomura N."/>
            <person name="Kikuchi H."/>
            <person name="Masuho Y."/>
            <person name="Yamashita R."/>
            <person name="Nakai K."/>
            <person name="Yada T."/>
            <person name="Nakamura Y."/>
            <person name="Ohara O."/>
            <person name="Isogai T."/>
            <person name="Sugano S."/>
        </authorList>
    </citation>
    <scope>NUCLEOTIDE SEQUENCE [LARGE SCALE MRNA] (ISOFORM 1)</scope>
    <scope>NUCLEOTIDE SEQUENCE [LARGE SCALE MRNA] OF 199-1004 (ISOFORMS 1 AND 2)</scope>
    <source>
        <tissue>Placenta</tissue>
        <tissue>Small intestine</tissue>
        <tissue>Tongue</tissue>
    </source>
</reference>
<reference key="3">
    <citation type="submission" date="2005-09" db="EMBL/GenBank/DDBJ databases">
        <authorList>
            <person name="Mural R.J."/>
            <person name="Istrail S."/>
            <person name="Sutton G.G."/>
            <person name="Florea L."/>
            <person name="Halpern A.L."/>
            <person name="Mobarry C.M."/>
            <person name="Lippert R."/>
            <person name="Walenz B."/>
            <person name="Shatkay H."/>
            <person name="Dew I."/>
            <person name="Miller J.R."/>
            <person name="Flanigan M.J."/>
            <person name="Edwards N.J."/>
            <person name="Bolanos R."/>
            <person name="Fasulo D."/>
            <person name="Halldorsson B.V."/>
            <person name="Hannenhalli S."/>
            <person name="Turner R."/>
            <person name="Yooseph S."/>
            <person name="Lu F."/>
            <person name="Nusskern D.R."/>
            <person name="Shue B.C."/>
            <person name="Zheng X.H."/>
            <person name="Zhong F."/>
            <person name="Delcher A.L."/>
            <person name="Huson D.H."/>
            <person name="Kravitz S.A."/>
            <person name="Mouchard L."/>
            <person name="Reinert K."/>
            <person name="Remington K.A."/>
            <person name="Clark A.G."/>
            <person name="Waterman M.S."/>
            <person name="Eichler E.E."/>
            <person name="Adams M.D."/>
            <person name="Hunkapiller M.W."/>
            <person name="Myers E.W."/>
            <person name="Venter J.C."/>
        </authorList>
    </citation>
    <scope>NUCLEOTIDE SEQUENCE [LARGE SCALE GENOMIC DNA]</scope>
</reference>
<reference key="4">
    <citation type="journal article" date="2004" name="Genome Res.">
        <title>The status, quality, and expansion of the NIH full-length cDNA project: the Mammalian Gene Collection (MGC).</title>
        <authorList>
            <consortium name="The MGC Project Team"/>
        </authorList>
    </citation>
    <scope>NUCLEOTIDE SEQUENCE [LARGE SCALE MRNA] (ISOFORM 1)</scope>
    <source>
        <tissue>Kidney</tissue>
        <tissue>Lymph</tissue>
    </source>
</reference>
<reference key="5">
    <citation type="journal article" date="2004" name="Traffic">
        <title>Characterization of BLOC-2, a complex containing the Hermansky-Pudlak syndrome proteins HPS3, HPS5 and HPS6.</title>
        <authorList>
            <person name="Di Pietro S.M."/>
            <person name="Falcon-Perez J.M."/>
            <person name="Dell'Angelica E.C."/>
        </authorList>
    </citation>
    <scope>INTERACTION WITH HPS6 AND HPS5</scope>
    <scope>SUBCELLULAR LOCATION</scope>
</reference>
<reference key="6">
    <citation type="journal article" date="2014" name="J. Cell Sci.">
        <title>HPS6 interacts with dynactin p150Glued to mediate retrograde trafficking and maturation of lysosomes.</title>
        <authorList>
            <person name="Li K."/>
            <person name="Yang L."/>
            <person name="Zhang C."/>
            <person name="Niu Y."/>
            <person name="Li W."/>
            <person name="Liu J.J."/>
        </authorList>
    </citation>
    <scope>INTERACTION WITH HPS6</scope>
</reference>
<reference key="7">
    <citation type="journal article" date="2001" name="Am. J. Hum. Genet.">
        <title>Hermansky-Pudlak syndrome type 3 in Ashkenazi Jews and other non-Puerto Rican patients with hypopigmentation and platelet storage-pool deficiency.</title>
        <authorList>
            <person name="Huizing M."/>
            <person name="Anikster Y."/>
            <person name="Fitzpatrick D.L."/>
            <person name="Jeong A.B."/>
            <person name="D'Souza M."/>
            <person name="Rausche M."/>
            <person name="Toro J.R."/>
            <person name="Kaiser-Kupfer M.I."/>
            <person name="White J.G."/>
            <person name="Gahl W.A."/>
        </authorList>
    </citation>
    <scope>VARIANT HPS3 TRP-397</scope>
</reference>
<reference key="8">
    <citation type="journal article" date="2006" name="Science">
        <title>The consensus coding sequences of human breast and colorectal cancers.</title>
        <authorList>
            <person name="Sjoeblom T."/>
            <person name="Jones S."/>
            <person name="Wood L.D."/>
            <person name="Parsons D.W."/>
            <person name="Lin J."/>
            <person name="Barber T.D."/>
            <person name="Mandelker D."/>
            <person name="Leary R.J."/>
            <person name="Ptak J."/>
            <person name="Silliman N."/>
            <person name="Szabo S."/>
            <person name="Buckhaults P."/>
            <person name="Farrell C."/>
            <person name="Meeh P."/>
            <person name="Markowitz S.D."/>
            <person name="Willis J."/>
            <person name="Dawson D."/>
            <person name="Willson J.K.V."/>
            <person name="Gazdar A.F."/>
            <person name="Hartigan J."/>
            <person name="Wu L."/>
            <person name="Liu C."/>
            <person name="Parmigiani G."/>
            <person name="Park B.H."/>
            <person name="Bachman K.E."/>
            <person name="Papadopoulos N."/>
            <person name="Vogelstein B."/>
            <person name="Kinzler K.W."/>
            <person name="Velculescu V.E."/>
        </authorList>
    </citation>
    <scope>VARIANT [LARGE SCALE ANALYSIS] GLN-397</scope>
</reference>
<comment type="function">
    <text evidence="1">Involved in early stages of melanosome biogenesis and maturation.</text>
</comment>
<comment type="subunit">
    <text evidence="5 7">Component of the biogenesis of lysosome-related organelles complex-2 (or BLOC2) composed of HPS3, HPS5 and HPS6. Interacts with HPS5 (PubMed:15030569). Interacts with HPS6 (PubMed:15030569, PubMed:25189619).</text>
</comment>
<comment type="interaction">
    <interactant intactId="EBI-16781620">
        <id>Q969F9</id>
    </interactant>
    <interactant intactId="EBI-721349">
        <id>Q86YV9</id>
        <label>HPS6</label>
    </interactant>
    <organismsDiffer>false</organismsDiffer>
    <experiments>2</experiments>
</comment>
<comment type="interaction">
    <interactant intactId="EBI-16781620">
        <id>Q969F9</id>
    </interactant>
    <interactant intactId="EBI-27055396">
        <id>A0A0H3NFP4</id>
        <label>sifA</label>
    </interactant>
    <organismsDiffer>true</organismsDiffer>
    <experiments>3</experiments>
</comment>
<comment type="subcellular location">
    <subcellularLocation>
        <location evidence="1">Cytoplasm</location>
    </subcellularLocation>
    <subcellularLocation>
        <location evidence="5">Cytoplasm</location>
        <location evidence="5">Cytosol</location>
    </subcellularLocation>
</comment>
<comment type="alternative products">
    <event type="alternative splicing"/>
    <isoform>
        <id>Q969F9-1</id>
        <name>1</name>
        <sequence type="displayed"/>
    </isoform>
    <isoform>
        <id>Q969F9-2</id>
        <name>2</name>
        <sequence type="described" ref="VSP_003878 VSP_003879"/>
    </isoform>
</comment>
<comment type="tissue specificity">
    <text>Widely expressed. Higher levels of expression are observed in kidney, liver and placenta.</text>
</comment>
<comment type="disease" evidence="3 4">
    <disease id="DI-00559">
        <name>Hermansky-Pudlak syndrome 3</name>
        <acronym>HPS3</acronym>
        <description>A form of Hermansky-Pudlak syndrome, a genetically heterogeneous autosomal recessive disorder characterized by oculocutaneous albinism, bleeding due to platelet storage pool deficiency, and lysosomal storage defects. This syndrome results from defects of diverse cytoplasmic organelles including melanosomes, platelet dense granules and lysosomes. Ceroid storage in the lungs is associated with pulmonary fibrosis, a common cause of premature death in individuals with HPS.</description>
        <dbReference type="MIM" id="614072"/>
    </disease>
    <text>The disease is caused by variants affecting the gene represented in this entry.</text>
</comment>
<comment type="sequence caution" evidence="9">
    <conflict type="erroneous initiation">
        <sequence resource="EMBL-CDS" id="AAH16901"/>
    </conflict>
</comment>
<comment type="sequence caution" evidence="9">
    <conflict type="erroneous initiation">
        <sequence resource="EMBL-CDS" id="AAH22062"/>
    </conflict>
</comment>
<comment type="sequence caution" evidence="9">
    <conflict type="erroneous initiation">
        <sequence resource="EMBL-CDS" id="BAB71221"/>
    </conflict>
</comment>
<comment type="online information" name="Albinism database (ADB)">
    <link uri="http://www.ifpcs.org/albinism/hps3mut.html"/>
    <text>HPS3 mutations</text>
</comment>
<gene>
    <name type="primary">HPS3</name>
</gene>
<keyword id="KW-0015">Albinism</keyword>
<keyword id="KW-0025">Alternative splicing</keyword>
<keyword id="KW-0963">Cytoplasm</keyword>
<keyword id="KW-0225">Disease variant</keyword>
<keyword id="KW-0363">Hermansky-Pudlak syndrome</keyword>
<keyword id="KW-1267">Proteomics identification</keyword>
<keyword id="KW-1185">Reference proteome</keyword>
<evidence type="ECO:0000250" key="1">
    <source>
        <dbReference type="UniProtKB" id="Q91VB4"/>
    </source>
</evidence>
<evidence type="ECO:0000255" key="2"/>
<evidence type="ECO:0000269" key="3">
    <source>
    </source>
</evidence>
<evidence type="ECO:0000269" key="4">
    <source>
    </source>
</evidence>
<evidence type="ECO:0000269" key="5">
    <source>
    </source>
</evidence>
<evidence type="ECO:0000269" key="6">
    <source>
    </source>
</evidence>
<evidence type="ECO:0000269" key="7">
    <source>
    </source>
</evidence>
<evidence type="ECO:0000303" key="8">
    <source>
    </source>
</evidence>
<evidence type="ECO:0000305" key="9"/>
<organism>
    <name type="scientific">Homo sapiens</name>
    <name type="common">Human</name>
    <dbReference type="NCBI Taxonomy" id="9606"/>
    <lineage>
        <taxon>Eukaryota</taxon>
        <taxon>Metazoa</taxon>
        <taxon>Chordata</taxon>
        <taxon>Craniata</taxon>
        <taxon>Vertebrata</taxon>
        <taxon>Euteleostomi</taxon>
        <taxon>Mammalia</taxon>
        <taxon>Eutheria</taxon>
        <taxon>Euarchontoglires</taxon>
        <taxon>Primates</taxon>
        <taxon>Haplorrhini</taxon>
        <taxon>Catarrhini</taxon>
        <taxon>Hominidae</taxon>
        <taxon>Homo</taxon>
    </lineage>
</organism>
<accession>Q969F9</accession>
<accession>A8K6G6</accession>
<accession>Q8WTV6</accession>
<accession>Q96AP1</accession>
<accession>Q96MR3</accession>
<accession>Q9H608</accession>